<geneLocation type="mitochondrion"/>
<geneLocation type="plasmid">
    <name>S-1</name>
</geneLocation>
<name>YMS4_MAIZE</name>
<proteinExistence type="predicted"/>
<accession>P10580</accession>
<keyword id="KW-0496">Mitochondrion</keyword>
<keyword id="KW-0614">Plasmid</keyword>
<sequence>YVLIMRLKLKRKIYRADFSEYKGLWSLYNRATDNLYSHLQRALEKYENFGVSAKHKVLQCLVHVVTSQSDNSVRYVYGNIFALVRLGTYVTVWYCYTESAPDFISVDPHYLDIELIIDLFKVRKLFVWIPYEEVISTSILEAYDAVVERTALTDCLDRKLREEELSDKFEFWGKCSDGDHTIDSVEENATIEYASSKEGSACKEGVDSSCKEEGGGCEEEGSGSEEDSDDSDNPRYLAFGVVVLVGVLLYVWYCSR</sequence>
<evidence type="ECO:0000256" key="1">
    <source>
        <dbReference type="SAM" id="MobiDB-lite"/>
    </source>
</evidence>
<evidence type="ECO:0000305" key="2"/>
<dbReference type="EMBL" id="X02451">
    <property type="status" value="NOT_ANNOTATED_CDS"/>
    <property type="molecule type" value="Genomic_DNA"/>
</dbReference>
<dbReference type="PaxDb" id="4577-GRMZM5G816453_P01"/>
<dbReference type="MaizeGDB" id="69620"/>
<dbReference type="GO" id="GO:0005739">
    <property type="term" value="C:mitochondrion"/>
    <property type="evidence" value="ECO:0007669"/>
    <property type="project" value="UniProtKB-SubCell"/>
</dbReference>
<protein>
    <recommendedName>
        <fullName>Uncharacterized 29 kDa protein in mitochondrial S-1 DNA</fullName>
    </recommendedName>
    <alternativeName>
        <fullName>URF 4</fullName>
    </alternativeName>
</protein>
<organism>
    <name type="scientific">Zea mays</name>
    <name type="common">Maize</name>
    <dbReference type="NCBI Taxonomy" id="4577"/>
    <lineage>
        <taxon>Eukaryota</taxon>
        <taxon>Viridiplantae</taxon>
        <taxon>Streptophyta</taxon>
        <taxon>Embryophyta</taxon>
        <taxon>Tracheophyta</taxon>
        <taxon>Spermatophyta</taxon>
        <taxon>Magnoliopsida</taxon>
        <taxon>Liliopsida</taxon>
        <taxon>Poales</taxon>
        <taxon>Poaceae</taxon>
        <taxon>PACMAD clade</taxon>
        <taxon>Panicoideae</taxon>
        <taxon>Andropogonodae</taxon>
        <taxon>Andropogoneae</taxon>
        <taxon>Tripsacinae</taxon>
        <taxon>Zea</taxon>
    </lineage>
</organism>
<comment type="subcellular location">
    <subcellularLocation>
        <location evidence="2">Mitochondrion</location>
    </subcellularLocation>
</comment>
<comment type="miscellaneous">
    <text>The mitochondria from the S male-sterile cytoplasm of maize contain unique DNA-protein complexes, designated S-1 and S-2. These complexes consist of double-stranded linear DNAs with proteins covalently attached to the 5'-termini.</text>
</comment>
<reference key="1">
    <citation type="journal article" date="1985" name="EMBO J.">
        <title>Nucleotide sequence of the S-1 mitochondrial DNA from the S cytoplasm of maize.</title>
        <authorList>
            <person name="Paillard M."/>
            <person name="Sederoff R.R."/>
            <person name="Levings C.S. III"/>
        </authorList>
    </citation>
    <scope>NUCLEOTIDE SEQUENCE [GENOMIC DNA]</scope>
</reference>
<feature type="chain" id="PRO_0000196907" description="Uncharacterized 29 kDa protein in mitochondrial S-1 DNA">
    <location>
        <begin position="1"/>
        <end position="256"/>
    </location>
</feature>
<feature type="region of interest" description="Disordered" evidence="1">
    <location>
        <begin position="201"/>
        <end position="231"/>
    </location>
</feature>
<feature type="compositionally biased region" description="Basic and acidic residues" evidence="1">
    <location>
        <begin position="201"/>
        <end position="214"/>
    </location>
</feature>
<feature type="compositionally biased region" description="Acidic residues" evidence="1">
    <location>
        <begin position="215"/>
        <end position="231"/>
    </location>
</feature>